<sequence>MKLTKAVFRFRRTNLSTLLVITYLVITTLYVWDHFRYHFTLPSDYNYAQMLADAWLDLEIITQYPHPYASHANDKVHDYLLDRVKEITRDSMFAEISDDYGMGLRTLFRQEDAISGTKESTVVYYESSNVLARVQGRNSALDGLLLSAHYDSVPSGYGATDDGMGVVSMLAILTHYVKNQPERTLVFNFNNNQEFGLAGASAFFEHPWSKEISYVINLEGTGAGGKAVLFRTSDVSTAQVYAEAVRQQPFGNSMYQQGFYNGHIGTETDFQVYEDQGLRGWDIAFYRPRNLYHTAKDTVLYTSKQALWHMLHTALQLTDYMAINKPDMEDTSNAVYFDLFGKWFVVWSARSLFYWNCIILALFPSILAILFLVAYDMQLLKFNFWDAMLRLPVSVCLAYFCVKLFQVLVGQLNPYVFSRDYVSPILAEASMFIFMNYVILSSWERLRPLRDFKTVALVEVSMVLWIYLISVTRWLRDSDYTATGLYPFTIGYTFVSIGAIIGVFCATFKAKLNPEDDSYVGDSKVDIEQQQMLMQHQYQQHSQKHSNQHSPHHSTHHSAQHSVHHSPRQSIHQVPSSEQRQRDASETPHVIISVDHTAGHQEDSEVTPLLNTGTVAPFPKPVPERVSRKSFLRNVVTSILNYDWSIQFMVVTPWVTYFTWICLDLIMGAMNQTIQESAKGTTFVTHMALIGSLLLSLPMLPFTYKLHSFAGMLFLLLAVTTAVWTIVAPPFTESSPLKLRFLQTIDLDKNNSSSVYLYGRERTFMEPILDDIPSVTKYRCVEYAGDGVDICEYNGMPPRMFNNHHEAESDWTKIMTLEILKDDRNSTSRTPYQPITAELKINVEENRVCTLNFNSTAFKNWKQGVSPLREVVILHENPSSNVTPSFYNTAMKNGYYQDEFGNDHYRWNNGITELQLHKLDFKRGYYKIGLEWIPQLLYRGYDPATSSSEEDDALGVSVTCYWGEYDTDSITDGFATTNVPAYDELRKYSPKNIIYSSKEKGMVSVTKYVEL</sequence>
<name>PFF1_EREGS</name>
<comment type="function">
    <text evidence="1">May be involved in vacuolar sorting and osmoregulation.</text>
</comment>
<comment type="cofactor">
    <cofactor evidence="2">
        <name>Zn(2+)</name>
        <dbReference type="ChEBI" id="CHEBI:29105"/>
    </cofactor>
    <text evidence="2">Binds 2 Zn(2+) ions per subunit.</text>
</comment>
<comment type="subcellular location">
    <subcellularLocation>
        <location evidence="1">Vacuole membrane</location>
        <topology evidence="3">Multi-pass membrane protein</topology>
    </subcellularLocation>
</comment>
<comment type="similarity">
    <text evidence="6">Belongs to the peptidase M28 family.</text>
</comment>
<keyword id="KW-0325">Glycoprotein</keyword>
<keyword id="KW-0378">Hydrolase</keyword>
<keyword id="KW-0472">Membrane</keyword>
<keyword id="KW-0479">Metal-binding</keyword>
<keyword id="KW-0482">Metalloprotease</keyword>
<keyword id="KW-0645">Protease</keyword>
<keyword id="KW-1185">Reference proteome</keyword>
<keyword id="KW-0812">Transmembrane</keyword>
<keyword id="KW-1133">Transmembrane helix</keyword>
<keyword id="KW-0926">Vacuole</keyword>
<keyword id="KW-0862">Zinc</keyword>
<gene>
    <name type="ordered locus">AGL209W</name>
</gene>
<dbReference type="EC" id="3.4.-.-" evidence="6"/>
<dbReference type="EMBL" id="AE016820">
    <property type="protein sequence ID" value="AAS54282.1"/>
    <property type="molecule type" value="Genomic_DNA"/>
</dbReference>
<dbReference type="RefSeq" id="NP_986458.1">
    <property type="nucleotide sequence ID" value="NM_211520.1"/>
</dbReference>
<dbReference type="SMR" id="Q750Z6"/>
<dbReference type="FunCoup" id="Q750Z6">
    <property type="interactions" value="21"/>
</dbReference>
<dbReference type="STRING" id="284811.Q750Z6"/>
<dbReference type="MEROPS" id="M28.A05"/>
<dbReference type="EnsemblFungi" id="AAS54282">
    <property type="protein sequence ID" value="AAS54282"/>
    <property type="gene ID" value="AGOS_AGL209W"/>
</dbReference>
<dbReference type="GeneID" id="4622751"/>
<dbReference type="KEGG" id="ago:AGOS_AGL209W"/>
<dbReference type="eggNOG" id="KOG2194">
    <property type="taxonomic scope" value="Eukaryota"/>
</dbReference>
<dbReference type="HOGENOM" id="CLU_006412_1_0_1"/>
<dbReference type="InParanoid" id="Q750Z6"/>
<dbReference type="OMA" id="TPWPVTI"/>
<dbReference type="OrthoDB" id="76293at2759"/>
<dbReference type="Proteomes" id="UP000000591">
    <property type="component" value="Chromosome VII"/>
</dbReference>
<dbReference type="GO" id="GO:0000329">
    <property type="term" value="C:fungal-type vacuole membrane"/>
    <property type="evidence" value="ECO:0007669"/>
    <property type="project" value="EnsemblFungi"/>
</dbReference>
<dbReference type="GO" id="GO:0046872">
    <property type="term" value="F:metal ion binding"/>
    <property type="evidence" value="ECO:0007669"/>
    <property type="project" value="UniProtKB-KW"/>
</dbReference>
<dbReference type="GO" id="GO:0008235">
    <property type="term" value="F:metalloexopeptidase activity"/>
    <property type="evidence" value="ECO:0007669"/>
    <property type="project" value="InterPro"/>
</dbReference>
<dbReference type="GO" id="GO:0006508">
    <property type="term" value="P:proteolysis"/>
    <property type="evidence" value="ECO:0000318"/>
    <property type="project" value="GO_Central"/>
</dbReference>
<dbReference type="CDD" id="cd03875">
    <property type="entry name" value="M28_Fxna_like"/>
    <property type="match status" value="1"/>
</dbReference>
<dbReference type="FunFam" id="3.40.630.10:FF:000057">
    <property type="entry name" value="Vacuolar membrane protease"/>
    <property type="match status" value="1"/>
</dbReference>
<dbReference type="Gene3D" id="3.40.630.10">
    <property type="entry name" value="Zn peptidases"/>
    <property type="match status" value="1"/>
</dbReference>
<dbReference type="InterPro" id="IPR048024">
    <property type="entry name" value="Fxna-like_M28_dom"/>
</dbReference>
<dbReference type="InterPro" id="IPR045175">
    <property type="entry name" value="M28_fam"/>
</dbReference>
<dbReference type="InterPro" id="IPR007484">
    <property type="entry name" value="Peptidase_M28"/>
</dbReference>
<dbReference type="InterPro" id="IPR053975">
    <property type="entry name" value="PFF1_C"/>
</dbReference>
<dbReference type="InterPro" id="IPR053976">
    <property type="entry name" value="PFF1_TM"/>
</dbReference>
<dbReference type="PANTHER" id="PTHR12147">
    <property type="entry name" value="METALLOPEPTIDASE M28 FAMILY MEMBER"/>
    <property type="match status" value="1"/>
</dbReference>
<dbReference type="PANTHER" id="PTHR12147:SF58">
    <property type="entry name" value="VACUOLAR MEMBRANE PROTEASE"/>
    <property type="match status" value="1"/>
</dbReference>
<dbReference type="Pfam" id="PF04389">
    <property type="entry name" value="Peptidase_M28"/>
    <property type="match status" value="1"/>
</dbReference>
<dbReference type="Pfam" id="PF22250">
    <property type="entry name" value="PFF1_C"/>
    <property type="match status" value="1"/>
</dbReference>
<dbReference type="Pfam" id="PF22251">
    <property type="entry name" value="PFF1_TM"/>
    <property type="match status" value="1"/>
</dbReference>
<dbReference type="SUPFAM" id="SSF53187">
    <property type="entry name" value="Zn-dependent exopeptidases"/>
    <property type="match status" value="1"/>
</dbReference>
<reference key="1">
    <citation type="journal article" date="2004" name="Science">
        <title>The Ashbya gossypii genome as a tool for mapping the ancient Saccharomyces cerevisiae genome.</title>
        <authorList>
            <person name="Dietrich F.S."/>
            <person name="Voegeli S."/>
            <person name="Brachat S."/>
            <person name="Lerch A."/>
            <person name="Gates K."/>
            <person name="Steiner S."/>
            <person name="Mohr C."/>
            <person name="Poehlmann R."/>
            <person name="Luedi P."/>
            <person name="Choi S."/>
            <person name="Wing R.A."/>
            <person name="Flavier A."/>
            <person name="Gaffney T.D."/>
            <person name="Philippsen P."/>
        </authorList>
    </citation>
    <scope>NUCLEOTIDE SEQUENCE [LARGE SCALE GENOMIC DNA]</scope>
    <source>
        <strain>ATCC 10895 / CBS 109.51 / FGSC 9923 / NRRL Y-1056</strain>
    </source>
</reference>
<reference key="2">
    <citation type="journal article" date="2013" name="G3 (Bethesda)">
        <title>Genomes of Ashbya fungi isolated from insects reveal four mating-type loci, numerous translocations, lack of transposons, and distinct gene duplications.</title>
        <authorList>
            <person name="Dietrich F.S."/>
            <person name="Voegeli S."/>
            <person name="Kuo S."/>
            <person name="Philippsen P."/>
        </authorList>
    </citation>
    <scope>GENOME REANNOTATION</scope>
    <source>
        <strain>ATCC 10895 / CBS 109.51 / FGSC 9923 / NRRL Y-1056</strain>
    </source>
</reference>
<proteinExistence type="inferred from homology"/>
<protein>
    <recommendedName>
        <fullName evidence="1">Vacuolar membrane protease</fullName>
        <ecNumber evidence="6">3.4.-.-</ecNumber>
    </recommendedName>
    <alternativeName>
        <fullName evidence="1">FXNA-related family protease 1</fullName>
    </alternativeName>
</protein>
<evidence type="ECO:0000250" key="1">
    <source>
        <dbReference type="UniProtKB" id="P38244"/>
    </source>
</evidence>
<evidence type="ECO:0000250" key="2">
    <source>
        <dbReference type="UniProtKB" id="P80561"/>
    </source>
</evidence>
<evidence type="ECO:0000255" key="3"/>
<evidence type="ECO:0000255" key="4">
    <source>
        <dbReference type="PROSITE-ProRule" id="PRU00498"/>
    </source>
</evidence>
<evidence type="ECO:0000256" key="5">
    <source>
        <dbReference type="SAM" id="MobiDB-lite"/>
    </source>
</evidence>
<evidence type="ECO:0000305" key="6"/>
<feature type="chain" id="PRO_0000411697" description="Vacuolar membrane protease">
    <location>
        <begin position="1"/>
        <end position="1011"/>
    </location>
</feature>
<feature type="topological domain" description="Cytoplasmic" evidence="1">
    <location>
        <begin position="1"/>
        <end position="14"/>
    </location>
</feature>
<feature type="transmembrane region" description="Helical; Name=1" evidence="3">
    <location>
        <begin position="15"/>
        <end position="35"/>
    </location>
</feature>
<feature type="topological domain" description="Vacuolar" evidence="1">
    <location>
        <begin position="36"/>
        <end position="352"/>
    </location>
</feature>
<feature type="transmembrane region" description="Helical; Name=2" evidence="3">
    <location>
        <begin position="353"/>
        <end position="373"/>
    </location>
</feature>
<feature type="topological domain" description="Cytoplasmic" evidence="1">
    <location>
        <begin position="374"/>
        <end position="390"/>
    </location>
</feature>
<feature type="transmembrane region" description="Helical; Name=3" evidence="3">
    <location>
        <begin position="391"/>
        <end position="411"/>
    </location>
</feature>
<feature type="topological domain" description="Vacuolar" evidence="1">
    <location>
        <begin position="412"/>
        <end position="420"/>
    </location>
</feature>
<feature type="transmembrane region" description="Helical; Name=4" evidence="3">
    <location>
        <begin position="421"/>
        <end position="441"/>
    </location>
</feature>
<feature type="topological domain" description="Cytoplasmic" evidence="1">
    <location>
        <begin position="442"/>
        <end position="451"/>
    </location>
</feature>
<feature type="transmembrane region" description="Helical; Name=5" evidence="3">
    <location>
        <begin position="452"/>
        <end position="472"/>
    </location>
</feature>
<feature type="topological domain" description="Vacuolar" evidence="1">
    <location>
        <begin position="473"/>
        <end position="487"/>
    </location>
</feature>
<feature type="transmembrane region" description="Helical; Name=6" evidence="3">
    <location>
        <begin position="488"/>
        <end position="508"/>
    </location>
</feature>
<feature type="topological domain" description="Cytoplasmic" evidence="1">
    <location>
        <begin position="509"/>
        <end position="647"/>
    </location>
</feature>
<feature type="transmembrane region" description="Helical; Name=7" evidence="3">
    <location>
        <begin position="648"/>
        <end position="668"/>
    </location>
</feature>
<feature type="topological domain" description="Vacuolar" evidence="1">
    <location>
        <begin position="669"/>
        <end position="681"/>
    </location>
</feature>
<feature type="transmembrane region" description="Helical; Name=8" evidence="3">
    <location>
        <begin position="682"/>
        <end position="702"/>
    </location>
</feature>
<feature type="topological domain" description="Cytoplasmic" evidence="1">
    <location>
        <begin position="703"/>
        <end position="708"/>
    </location>
</feature>
<feature type="transmembrane region" description="Helical; Name=9" evidence="3">
    <location>
        <begin position="709"/>
        <end position="729"/>
    </location>
</feature>
<feature type="topological domain" description="Vacuolar" evidence="1">
    <location>
        <begin position="730"/>
        <end position="1011"/>
    </location>
</feature>
<feature type="region of interest" description="Disordered" evidence="5">
    <location>
        <begin position="534"/>
        <end position="585"/>
    </location>
</feature>
<feature type="compositionally biased region" description="Basic residues" evidence="5">
    <location>
        <begin position="542"/>
        <end position="567"/>
    </location>
</feature>
<feature type="compositionally biased region" description="Polar residues" evidence="5">
    <location>
        <begin position="568"/>
        <end position="578"/>
    </location>
</feature>
<feature type="binding site" evidence="2">
    <location>
        <position position="149"/>
    </location>
    <ligand>
        <name>Zn(2+)</name>
        <dbReference type="ChEBI" id="CHEBI:29105"/>
        <label>1</label>
        <note>catalytic</note>
    </ligand>
</feature>
<feature type="binding site" evidence="2">
    <location>
        <position position="161"/>
    </location>
    <ligand>
        <name>Zn(2+)</name>
        <dbReference type="ChEBI" id="CHEBI:29105"/>
        <label>1</label>
        <note>catalytic</note>
    </ligand>
</feature>
<feature type="binding site" evidence="2">
    <location>
        <position position="161"/>
    </location>
    <ligand>
        <name>Zn(2+)</name>
        <dbReference type="ChEBI" id="CHEBI:29105"/>
        <label>2</label>
        <note>catalytic</note>
    </ligand>
</feature>
<feature type="binding site" evidence="2">
    <location>
        <position position="194"/>
    </location>
    <ligand>
        <name>Zn(2+)</name>
        <dbReference type="ChEBI" id="CHEBI:29105"/>
        <label>2</label>
        <note>catalytic</note>
    </ligand>
</feature>
<feature type="binding site" evidence="2">
    <location>
        <position position="219"/>
    </location>
    <ligand>
        <name>Zn(2+)</name>
        <dbReference type="ChEBI" id="CHEBI:29105"/>
        <label>1</label>
        <note>catalytic</note>
    </ligand>
</feature>
<feature type="binding site" evidence="2">
    <location>
        <position position="293"/>
    </location>
    <ligand>
        <name>Zn(2+)</name>
        <dbReference type="ChEBI" id="CHEBI:29105"/>
        <label>2</label>
        <note>catalytic</note>
    </ligand>
</feature>
<feature type="site" description="Transition state stabilizer" evidence="2">
    <location>
        <position position="292"/>
    </location>
</feature>
<feature type="glycosylation site" description="N-linked (GlcNAc...) asparagine" evidence="4">
    <location>
        <position position="671"/>
    </location>
</feature>
<feature type="glycosylation site" description="N-linked (GlcNAc...) asparagine" evidence="4">
    <location>
        <position position="751"/>
    </location>
</feature>
<feature type="glycosylation site" description="N-linked (GlcNAc...) asparagine" evidence="4">
    <location>
        <position position="825"/>
    </location>
</feature>
<feature type="glycosylation site" description="N-linked (GlcNAc...) asparagine" evidence="4">
    <location>
        <position position="854"/>
    </location>
</feature>
<accession>Q750Z6</accession>
<organism>
    <name type="scientific">Eremothecium gossypii (strain ATCC 10895 / CBS 109.51 / FGSC 9923 / NRRL Y-1056)</name>
    <name type="common">Yeast</name>
    <name type="synonym">Ashbya gossypii</name>
    <dbReference type="NCBI Taxonomy" id="284811"/>
    <lineage>
        <taxon>Eukaryota</taxon>
        <taxon>Fungi</taxon>
        <taxon>Dikarya</taxon>
        <taxon>Ascomycota</taxon>
        <taxon>Saccharomycotina</taxon>
        <taxon>Saccharomycetes</taxon>
        <taxon>Saccharomycetales</taxon>
        <taxon>Saccharomycetaceae</taxon>
        <taxon>Eremothecium</taxon>
    </lineage>
</organism>